<comment type="function">
    <text evidence="1 5">Repressor that binds to DNA sequences containing a bipartite element consisting of a direct repeat of the sequence 5'-AAAGTTT-3' separated by 2-9 nucleotides. Represses basal transcription activity from target promoters (By similarity). Inhibits colony formation in cultured breast cancer cells.</text>
</comment>
<comment type="subcellular location">
    <subcellularLocation>
        <location evidence="5">Nucleus</location>
    </subcellularLocation>
</comment>
<comment type="tissue specificity">
    <text evidence="5">Detected at low levels in heart, liver, kidney, skeletal muscle, pancreas, testis, ovary and prostate. Detected at even lower levels in mammary epithelial cells and breast cancer cells.</text>
</comment>
<comment type="similarity">
    <text evidence="6">Belongs to the MYT1 family.</text>
</comment>
<sequence length="1047" mass="115155">MDAEAEDKTLRTRSKGTEVPMDSLIQELSVAYDCSMAKKRTAEDQALGVPVNKRKSLLMKPRHYSPKADCQEDRSDRTEDDGPLETHGHSTAEEIMIKPMDESLLSTAQENSSRKEDRYSCYQELMVKSLMHLGKFEKNVSVQTVSENLNDSGIQSLKAESDEADECFLIHSDDGRDKIDDSQPPFCSSDDNESNSESAENGWDSGSNFSEETKPPRVPKYVLTDHKKDLLEVPEIKTEGDKFIPCENRCDSETERKDPQNALAEPLDGNAQPSFPDVEEEDSESLAVMTEEGSDLEKAKGNLSLLEQAIALQAERGCVFHNTYKELDRFLLEHLAGERRQTKVIDMGGRQIFNNKHSPRPEKRETKCPIPGCDGTGHVTGLYPHHRSLSGCPHKVRVPLEILAMHENVLKCPTPGCTGRGHVNSNRNTHRSLSGCPIAAAEKLAMSQDKNQLDSPQTGQCPDQAHRTSLVKQIEFNFPSQAITSPRATVSKEQEKFGKVPFDYASFDAQVFGKRPLIQTVQGRKTPPFPESKHFPNPVKFPNRLPSAGAHTQSPGRASSYSYGQCSEDTHIAAAAAILNLSTRCREATDILSNKPQSLHAKGAEIEVDENGTLDLSMKKNRILDKSAPLTSSNTSIPTPSSSPFKTSSILVNAAFYQALCDQEGWDTPINYSKTHGKTEEEKEKDPVSSLENLEEKKFPGEASIPSPKPKLHARDLKKELITCPTPGCDGSGHVTGNYASHRSVSGCPLADKTLKSLMAANSQELKCPTPGCDGSGHVTGNYASHRSLSGCPRARKGGVKMTPTKEEKEDPELKCPVIGCDGQGHISGKYTSHRTASGCPLAAKRQKENPLNGASLSWKLNKQELPHCPLPGCNGLGHVNNVFVTHRSLSGCPLNAQVIKKGKVSEELMTIKLKATGGIESDEEIRHLDEEIKELNESNLKIEADMMKLQTQITSMESNLKTIEEENKLIEQNNESLLKELAGLSQALISSLADIQLPQMGPISEQNFEAYVNTLTDMYSNLERDYSPECKALLESIKQAVKGIHV</sequence>
<accession>O60284</accession>
<accession>Q17RY1</accession>
<proteinExistence type="evidence at protein level"/>
<organism>
    <name type="scientific">Homo sapiens</name>
    <name type="common">Human</name>
    <dbReference type="NCBI Taxonomy" id="9606"/>
    <lineage>
        <taxon>Eukaryota</taxon>
        <taxon>Metazoa</taxon>
        <taxon>Chordata</taxon>
        <taxon>Craniata</taxon>
        <taxon>Vertebrata</taxon>
        <taxon>Euteleostomi</taxon>
        <taxon>Mammalia</taxon>
        <taxon>Eutheria</taxon>
        <taxon>Euarchontoglires</taxon>
        <taxon>Primates</taxon>
        <taxon>Haplorrhini</taxon>
        <taxon>Catarrhini</taxon>
        <taxon>Hominidae</taxon>
        <taxon>Homo</taxon>
    </lineage>
</organism>
<reference key="1">
    <citation type="journal article" date="1998" name="DNA Res.">
        <title>Prediction of the coding sequences of unidentified human genes. IX. The complete sequences of 100 new cDNA clones from brain which can code for large proteins in vitro.</title>
        <authorList>
            <person name="Nagase T."/>
            <person name="Ishikawa K."/>
            <person name="Miyajima N."/>
            <person name="Tanaka A."/>
            <person name="Kotani H."/>
            <person name="Nomura N."/>
            <person name="Ohara O."/>
        </authorList>
    </citation>
    <scope>NUCLEOTIDE SEQUENCE [LARGE SCALE MRNA]</scope>
    <source>
        <tissue>Brain</tissue>
    </source>
</reference>
<reference key="2">
    <citation type="journal article" date="2004" name="Genome Res.">
        <title>The status, quality, and expansion of the NIH full-length cDNA project: the Mammalian Gene Collection (MGC).</title>
        <authorList>
            <consortium name="The MGC Project Team"/>
        </authorList>
    </citation>
    <scope>NUCLEOTIDE SEQUENCE [LARGE SCALE MRNA]</scope>
    <source>
        <tissue>Brain</tissue>
    </source>
</reference>
<reference key="3">
    <citation type="journal article" date="2004" name="Oncogene">
        <title>ST18 is a breast cancer tumor suppressor gene at human chromosome 8q11.2.</title>
        <authorList>
            <person name="Jandrig B."/>
            <person name="Seitz S."/>
            <person name="Hinzmann B."/>
            <person name="Arnold W."/>
            <person name="Micheel B."/>
            <person name="Koelble K."/>
            <person name="Siebert R."/>
            <person name="Schwartz A."/>
            <person name="Ruecker K."/>
            <person name="Schlag P.M."/>
            <person name="Scherneck S."/>
            <person name="Rosenthal A."/>
        </authorList>
    </citation>
    <scope>FUNCTION</scope>
    <scope>SUBCELLULAR LOCATION</scope>
    <scope>TISSUE SPECIFICITY</scope>
</reference>
<reference key="4">
    <citation type="submission" date="2005-11" db="PDB data bank">
        <title>Solution structure of tandem repeat of the fifth and sixth zinc-finger C2HC domains from human ST18.</title>
        <authorList>
            <consortium name="RIKEN structural genomics initiative (RSGI)"/>
        </authorList>
    </citation>
    <scope>STRUCTURE BY NMR OF 812-906 IN COMPLEX WITH ZINC IONS</scope>
</reference>
<keyword id="KW-0002">3D-structure</keyword>
<keyword id="KW-0175">Coiled coil</keyword>
<keyword id="KW-0238">DNA-binding</keyword>
<keyword id="KW-0479">Metal-binding</keyword>
<keyword id="KW-0539">Nucleus</keyword>
<keyword id="KW-1267">Proteomics identification</keyword>
<keyword id="KW-1185">Reference proteome</keyword>
<keyword id="KW-0677">Repeat</keyword>
<keyword id="KW-0678">Repressor</keyword>
<keyword id="KW-0804">Transcription</keyword>
<keyword id="KW-0805">Transcription regulation</keyword>
<keyword id="KW-0862">Zinc</keyword>
<keyword id="KW-0863">Zinc-finger</keyword>
<dbReference type="EMBL" id="AB011107">
    <property type="protein sequence ID" value="BAA25461.1"/>
    <property type="molecule type" value="mRNA"/>
</dbReference>
<dbReference type="EMBL" id="BC117147">
    <property type="protein sequence ID" value="AAI17148.1"/>
    <property type="molecule type" value="mRNA"/>
</dbReference>
<dbReference type="EMBL" id="BC117149">
    <property type="protein sequence ID" value="AAI17150.1"/>
    <property type="molecule type" value="mRNA"/>
</dbReference>
<dbReference type="CCDS" id="CCDS6149.1"/>
<dbReference type="RefSeq" id="NP_001339755.1">
    <property type="nucleotide sequence ID" value="NM_001352826.2"/>
</dbReference>
<dbReference type="RefSeq" id="NP_001339756.1">
    <property type="nucleotide sequence ID" value="NM_001352827.2"/>
</dbReference>
<dbReference type="RefSeq" id="NP_001339757.1">
    <property type="nucleotide sequence ID" value="NM_001352828.2"/>
</dbReference>
<dbReference type="RefSeq" id="NP_001339758.1">
    <property type="nucleotide sequence ID" value="NM_001352829.2"/>
</dbReference>
<dbReference type="RefSeq" id="NP_001339759.1">
    <property type="nucleotide sequence ID" value="NM_001352830.2"/>
</dbReference>
<dbReference type="RefSeq" id="NP_001339760.1">
    <property type="nucleotide sequence ID" value="NM_001352831.2"/>
</dbReference>
<dbReference type="RefSeq" id="NP_001339761.1">
    <property type="nucleotide sequence ID" value="NM_001352832.2"/>
</dbReference>
<dbReference type="RefSeq" id="NP_001339762.1">
    <property type="nucleotide sequence ID" value="NM_001352833.2"/>
</dbReference>
<dbReference type="RefSeq" id="NP_001339763.1">
    <property type="nucleotide sequence ID" value="NM_001352834.2"/>
</dbReference>
<dbReference type="RefSeq" id="NP_001339764.1">
    <property type="nucleotide sequence ID" value="NM_001352835.2"/>
</dbReference>
<dbReference type="RefSeq" id="NP_001339765.1">
    <property type="nucleotide sequence ID" value="NM_001352836.2"/>
</dbReference>
<dbReference type="RefSeq" id="NP_001339766.1">
    <property type="nucleotide sequence ID" value="NM_001352837.2"/>
</dbReference>
<dbReference type="RefSeq" id="NP_001339767.1">
    <property type="nucleotide sequence ID" value="NM_001352838.2"/>
</dbReference>
<dbReference type="RefSeq" id="NP_001339768.1">
    <property type="nucleotide sequence ID" value="NM_001352839.2"/>
</dbReference>
<dbReference type="RefSeq" id="NP_001339769.1">
    <property type="nucleotide sequence ID" value="NM_001352840.2"/>
</dbReference>
<dbReference type="RefSeq" id="NP_001339770.1">
    <property type="nucleotide sequence ID" value="NM_001352841.2"/>
</dbReference>
<dbReference type="RefSeq" id="NP_001339771.1">
    <property type="nucleotide sequence ID" value="NM_001352842.2"/>
</dbReference>
<dbReference type="RefSeq" id="NP_001339772.1">
    <property type="nucleotide sequence ID" value="NM_001352843.2"/>
</dbReference>
<dbReference type="RefSeq" id="NP_001339773.1">
    <property type="nucleotide sequence ID" value="NM_001352844.2"/>
</dbReference>
<dbReference type="RefSeq" id="NP_001339774.1">
    <property type="nucleotide sequence ID" value="NM_001352845.2"/>
</dbReference>
<dbReference type="RefSeq" id="NP_001339775.1">
    <property type="nucleotide sequence ID" value="NM_001352846.2"/>
</dbReference>
<dbReference type="RefSeq" id="NP_001339776.1">
    <property type="nucleotide sequence ID" value="NM_001352847.2"/>
</dbReference>
<dbReference type="RefSeq" id="NP_001339777.1">
    <property type="nucleotide sequence ID" value="NM_001352848.2"/>
</dbReference>
<dbReference type="RefSeq" id="NP_001339778.1">
    <property type="nucleotide sequence ID" value="NM_001352849.2"/>
</dbReference>
<dbReference type="RefSeq" id="NP_001339779.1">
    <property type="nucleotide sequence ID" value="NM_001352850.2"/>
</dbReference>
<dbReference type="RefSeq" id="NP_001339780.1">
    <property type="nucleotide sequence ID" value="NM_001352851.2"/>
</dbReference>
<dbReference type="RefSeq" id="NP_001339781.1">
    <property type="nucleotide sequence ID" value="NM_001352852.2"/>
</dbReference>
<dbReference type="RefSeq" id="NP_001339782.1">
    <property type="nucleotide sequence ID" value="NM_001352853.2"/>
</dbReference>
<dbReference type="RefSeq" id="NP_001339783.1">
    <property type="nucleotide sequence ID" value="NM_001352854.2"/>
</dbReference>
<dbReference type="RefSeq" id="NP_001339784.1">
    <property type="nucleotide sequence ID" value="NM_001352855.2"/>
</dbReference>
<dbReference type="RefSeq" id="NP_001339785.1">
    <property type="nucleotide sequence ID" value="NM_001352856.2"/>
</dbReference>
<dbReference type="RefSeq" id="NP_001339786.1">
    <property type="nucleotide sequence ID" value="NM_001352857.2"/>
</dbReference>
<dbReference type="RefSeq" id="NP_055497.1">
    <property type="nucleotide sequence ID" value="NM_014682.3"/>
</dbReference>
<dbReference type="RefSeq" id="XP_006716550.1">
    <property type="nucleotide sequence ID" value="XM_006716487.1"/>
</dbReference>
<dbReference type="RefSeq" id="XP_011515931.1">
    <property type="nucleotide sequence ID" value="XM_011517629.1"/>
</dbReference>
<dbReference type="RefSeq" id="XP_011515933.1">
    <property type="nucleotide sequence ID" value="XM_011517631.1"/>
</dbReference>
<dbReference type="RefSeq" id="XP_011515934.1">
    <property type="nucleotide sequence ID" value="XM_011517632.1"/>
</dbReference>
<dbReference type="RefSeq" id="XP_011515935.1">
    <property type="nucleotide sequence ID" value="XM_011517633.1"/>
</dbReference>
<dbReference type="RefSeq" id="XP_011515936.1">
    <property type="nucleotide sequence ID" value="XM_011517634.1"/>
</dbReference>
<dbReference type="RefSeq" id="XP_011515937.1">
    <property type="nucleotide sequence ID" value="XM_011517635.1"/>
</dbReference>
<dbReference type="RefSeq" id="XP_011515938.1">
    <property type="nucleotide sequence ID" value="XM_011517636.2"/>
</dbReference>
<dbReference type="RefSeq" id="XP_011515939.1">
    <property type="nucleotide sequence ID" value="XM_011517637.1"/>
</dbReference>
<dbReference type="RefSeq" id="XP_011515940.1">
    <property type="nucleotide sequence ID" value="XM_011517638.2"/>
</dbReference>
<dbReference type="RefSeq" id="XP_016869536.1">
    <property type="nucleotide sequence ID" value="XM_017014047.1"/>
</dbReference>
<dbReference type="RefSeq" id="XP_016869537.1">
    <property type="nucleotide sequence ID" value="XM_017014048.1"/>
</dbReference>
<dbReference type="RefSeq" id="XP_016869538.1">
    <property type="nucleotide sequence ID" value="XM_017014049.1"/>
</dbReference>
<dbReference type="RefSeq" id="XP_016869539.1">
    <property type="nucleotide sequence ID" value="XM_017014050.1"/>
</dbReference>
<dbReference type="RefSeq" id="XP_016869540.1">
    <property type="nucleotide sequence ID" value="XM_017014051.1"/>
</dbReference>
<dbReference type="RefSeq" id="XP_016869541.1">
    <property type="nucleotide sequence ID" value="XM_017014052.1"/>
</dbReference>
<dbReference type="RefSeq" id="XP_016869542.1">
    <property type="nucleotide sequence ID" value="XM_017014053.1"/>
</dbReference>
<dbReference type="RefSeq" id="XP_016869543.1">
    <property type="nucleotide sequence ID" value="XM_017014054.1"/>
</dbReference>
<dbReference type="RefSeq" id="XP_016869544.1">
    <property type="nucleotide sequence ID" value="XM_017014055.1"/>
</dbReference>
<dbReference type="RefSeq" id="XP_016869545.1">
    <property type="nucleotide sequence ID" value="XM_017014056.1"/>
</dbReference>
<dbReference type="RefSeq" id="XP_016869546.1">
    <property type="nucleotide sequence ID" value="XM_017014057.1"/>
</dbReference>
<dbReference type="RefSeq" id="XP_016869547.1">
    <property type="nucleotide sequence ID" value="XM_017014058.2"/>
</dbReference>
<dbReference type="RefSeq" id="XP_016869548.1">
    <property type="nucleotide sequence ID" value="XM_017014059.1"/>
</dbReference>
<dbReference type="RefSeq" id="XP_016869549.1">
    <property type="nucleotide sequence ID" value="XM_017014060.1"/>
</dbReference>
<dbReference type="RefSeq" id="XP_016869550.1">
    <property type="nucleotide sequence ID" value="XM_017014061.1"/>
</dbReference>
<dbReference type="RefSeq" id="XP_016869551.1">
    <property type="nucleotide sequence ID" value="XM_017014062.1"/>
</dbReference>
<dbReference type="RefSeq" id="XP_016869552.1">
    <property type="nucleotide sequence ID" value="XM_017014063.1"/>
</dbReference>
<dbReference type="RefSeq" id="XP_016869553.1">
    <property type="nucleotide sequence ID" value="XM_017014064.1"/>
</dbReference>
<dbReference type="RefSeq" id="XP_016869554.1">
    <property type="nucleotide sequence ID" value="XM_017014065.1"/>
</dbReference>
<dbReference type="RefSeq" id="XP_016869555.1">
    <property type="nucleotide sequence ID" value="XM_017014066.1"/>
</dbReference>
<dbReference type="RefSeq" id="XP_016869556.1">
    <property type="nucleotide sequence ID" value="XM_017014067.1"/>
</dbReference>
<dbReference type="RefSeq" id="XP_016869557.1">
    <property type="nucleotide sequence ID" value="XM_017014068.1"/>
</dbReference>
<dbReference type="RefSeq" id="XP_016869558.1">
    <property type="nucleotide sequence ID" value="XM_017014069.1"/>
</dbReference>
<dbReference type="RefSeq" id="XP_016869559.1">
    <property type="nucleotide sequence ID" value="XM_017014070.1"/>
</dbReference>
<dbReference type="RefSeq" id="XP_016869560.1">
    <property type="nucleotide sequence ID" value="XM_017014071.1"/>
</dbReference>
<dbReference type="RefSeq" id="XP_024303117.1">
    <property type="nucleotide sequence ID" value="XM_024447349.2"/>
</dbReference>
<dbReference type="RefSeq" id="XP_047278440.1">
    <property type="nucleotide sequence ID" value="XM_047422484.1"/>
</dbReference>
<dbReference type="RefSeq" id="XP_054217576.1">
    <property type="nucleotide sequence ID" value="XM_054361601.1"/>
</dbReference>
<dbReference type="RefSeq" id="XP_054217577.1">
    <property type="nucleotide sequence ID" value="XM_054361602.1"/>
</dbReference>
<dbReference type="RefSeq" id="XP_054217578.1">
    <property type="nucleotide sequence ID" value="XM_054361603.1"/>
</dbReference>
<dbReference type="PDB" id="2CS8">
    <property type="method" value="NMR"/>
    <property type="chains" value="A=812-906"/>
</dbReference>
<dbReference type="PDBsum" id="2CS8"/>
<dbReference type="SMR" id="O60284"/>
<dbReference type="BioGRID" id="115057">
    <property type="interactions" value="5"/>
</dbReference>
<dbReference type="FunCoup" id="O60284">
    <property type="interactions" value="625"/>
</dbReference>
<dbReference type="IntAct" id="O60284">
    <property type="interactions" value="4"/>
</dbReference>
<dbReference type="MINT" id="O60284"/>
<dbReference type="STRING" id="9606.ENSP00000276480"/>
<dbReference type="GlyGen" id="O60284">
    <property type="glycosylation" value="3 sites"/>
</dbReference>
<dbReference type="iPTMnet" id="O60284"/>
<dbReference type="PhosphoSitePlus" id="O60284"/>
<dbReference type="BioMuta" id="ST18"/>
<dbReference type="MassIVE" id="O60284"/>
<dbReference type="PaxDb" id="9606-ENSP00000276480"/>
<dbReference type="PeptideAtlas" id="O60284"/>
<dbReference type="ProteomicsDB" id="49313"/>
<dbReference type="Antibodypedia" id="24412">
    <property type="antibodies" value="225 antibodies from 26 providers"/>
</dbReference>
<dbReference type="DNASU" id="9705"/>
<dbReference type="Ensembl" id="ENST00000276480.11">
    <property type="protein sequence ID" value="ENSP00000276480.7"/>
    <property type="gene ID" value="ENSG00000147488.13"/>
</dbReference>
<dbReference type="Ensembl" id="ENST00000689386.1">
    <property type="protein sequence ID" value="ENSP00000509475.1"/>
    <property type="gene ID" value="ENSG00000147488.13"/>
</dbReference>
<dbReference type="Ensembl" id="ENST00000693301.1">
    <property type="protein sequence ID" value="ENSP00000508476.1"/>
    <property type="gene ID" value="ENSG00000147488.13"/>
</dbReference>
<dbReference type="Ensembl" id="ENST00000699087.1">
    <property type="protein sequence ID" value="ENSP00000514122.1"/>
    <property type="gene ID" value="ENSG00000147488.13"/>
</dbReference>
<dbReference type="GeneID" id="9705"/>
<dbReference type="KEGG" id="hsa:9705"/>
<dbReference type="MANE-Select" id="ENST00000689386.1">
    <property type="protein sequence ID" value="ENSP00000509475.1"/>
    <property type="RefSeq nucleotide sequence ID" value="NM_001352837.2"/>
    <property type="RefSeq protein sequence ID" value="NP_001339766.1"/>
</dbReference>
<dbReference type="UCSC" id="uc003xra.3">
    <property type="organism name" value="human"/>
</dbReference>
<dbReference type="AGR" id="HGNC:18695"/>
<dbReference type="CTD" id="9705"/>
<dbReference type="DisGeNET" id="9705"/>
<dbReference type="GeneCards" id="ST18"/>
<dbReference type="HGNC" id="HGNC:18695">
    <property type="gene designation" value="ST18"/>
</dbReference>
<dbReference type="HPA" id="ENSG00000147488">
    <property type="expression patterns" value="Tissue enriched (brain)"/>
</dbReference>
<dbReference type="neXtProt" id="NX_O60284"/>
<dbReference type="OpenTargets" id="ENSG00000147488"/>
<dbReference type="PharmGKB" id="PA38642"/>
<dbReference type="VEuPathDB" id="HostDB:ENSG00000147488"/>
<dbReference type="eggNOG" id="KOG3803">
    <property type="taxonomic scope" value="Eukaryota"/>
</dbReference>
<dbReference type="GeneTree" id="ENSGT00940000159905"/>
<dbReference type="HOGENOM" id="CLU_007226_0_0_1"/>
<dbReference type="InParanoid" id="O60284"/>
<dbReference type="OMA" id="RYTCYQE"/>
<dbReference type="OrthoDB" id="10069059at2759"/>
<dbReference type="PAN-GO" id="O60284">
    <property type="GO annotations" value="4 GO annotations based on evolutionary models"/>
</dbReference>
<dbReference type="PhylomeDB" id="O60284"/>
<dbReference type="TreeFam" id="TF317299"/>
<dbReference type="PathwayCommons" id="O60284"/>
<dbReference type="SignaLink" id="O60284"/>
<dbReference type="BioGRID-ORCS" id="9705">
    <property type="hits" value="7 hits in 1168 CRISPR screens"/>
</dbReference>
<dbReference type="ChiTaRS" id="ST18">
    <property type="organism name" value="human"/>
</dbReference>
<dbReference type="EvolutionaryTrace" id="O60284"/>
<dbReference type="GenomeRNAi" id="9705"/>
<dbReference type="Pharos" id="O60284">
    <property type="development level" value="Tbio"/>
</dbReference>
<dbReference type="PRO" id="PR:O60284"/>
<dbReference type="Proteomes" id="UP000005640">
    <property type="component" value="Chromosome 8"/>
</dbReference>
<dbReference type="RNAct" id="O60284">
    <property type="molecule type" value="protein"/>
</dbReference>
<dbReference type="Bgee" id="ENSG00000147488">
    <property type="expression patterns" value="Expressed in corpus callosum and 142 other cell types or tissues"/>
</dbReference>
<dbReference type="ExpressionAtlas" id="O60284">
    <property type="expression patterns" value="baseline and differential"/>
</dbReference>
<dbReference type="GO" id="GO:0000785">
    <property type="term" value="C:chromatin"/>
    <property type="evidence" value="ECO:0000247"/>
    <property type="project" value="NTNU_SB"/>
</dbReference>
<dbReference type="GO" id="GO:0005634">
    <property type="term" value="C:nucleus"/>
    <property type="evidence" value="ECO:0000314"/>
    <property type="project" value="UniProtKB"/>
</dbReference>
<dbReference type="GO" id="GO:0032993">
    <property type="term" value="C:protein-DNA complex"/>
    <property type="evidence" value="ECO:0000314"/>
    <property type="project" value="UniProtKB"/>
</dbReference>
<dbReference type="GO" id="GO:0000981">
    <property type="term" value="F:DNA-binding transcription factor activity, RNA polymerase II-specific"/>
    <property type="evidence" value="ECO:0000247"/>
    <property type="project" value="NTNU_SB"/>
</dbReference>
<dbReference type="GO" id="GO:0000978">
    <property type="term" value="F:RNA polymerase II cis-regulatory region sequence-specific DNA binding"/>
    <property type="evidence" value="ECO:0000314"/>
    <property type="project" value="UniProtKB"/>
</dbReference>
<dbReference type="GO" id="GO:0008270">
    <property type="term" value="F:zinc ion binding"/>
    <property type="evidence" value="ECO:0007669"/>
    <property type="project" value="UniProtKB-KW"/>
</dbReference>
<dbReference type="GO" id="GO:0070498">
    <property type="term" value="P:interleukin-1-mediated signaling pathway"/>
    <property type="evidence" value="ECO:0000315"/>
    <property type="project" value="UniProtKB"/>
</dbReference>
<dbReference type="GO" id="GO:0070102">
    <property type="term" value="P:interleukin-6-mediated signaling pathway"/>
    <property type="evidence" value="ECO:0000315"/>
    <property type="project" value="UniProtKB"/>
</dbReference>
<dbReference type="GO" id="GO:0008285">
    <property type="term" value="P:negative regulation of cell population proliferation"/>
    <property type="evidence" value="ECO:0000314"/>
    <property type="project" value="UniProtKB"/>
</dbReference>
<dbReference type="GO" id="GO:0045944">
    <property type="term" value="P:positive regulation of transcription by RNA polymerase II"/>
    <property type="evidence" value="ECO:0000315"/>
    <property type="project" value="UniProtKB"/>
</dbReference>
<dbReference type="GO" id="GO:0010468">
    <property type="term" value="P:regulation of gene expression"/>
    <property type="evidence" value="ECO:0000318"/>
    <property type="project" value="GO_Central"/>
</dbReference>
<dbReference type="GO" id="GO:0033209">
    <property type="term" value="P:tumor necrosis factor-mediated signaling pathway"/>
    <property type="evidence" value="ECO:0000315"/>
    <property type="project" value="UniProtKB"/>
</dbReference>
<dbReference type="FunFam" id="4.10.320.30:FF:000001">
    <property type="entry name" value="Myelin transcription factor 1-like, a"/>
    <property type="match status" value="6"/>
</dbReference>
<dbReference type="Gene3D" id="4.10.320.30">
    <property type="match status" value="6"/>
</dbReference>
<dbReference type="InterPro" id="IPR013681">
    <property type="entry name" value="Myelin_TF"/>
</dbReference>
<dbReference type="InterPro" id="IPR002515">
    <property type="entry name" value="Znf_C2H2C"/>
</dbReference>
<dbReference type="InterPro" id="IPR036060">
    <property type="entry name" value="Znf_C2H2C_sf"/>
</dbReference>
<dbReference type="PANTHER" id="PTHR10816">
    <property type="entry name" value="MYELIN TRANSCRIPTION FACTOR 1-RELATED"/>
    <property type="match status" value="1"/>
</dbReference>
<dbReference type="PANTHER" id="PTHR10816:SF9">
    <property type="entry name" value="SUPPRESSION OF TUMORIGENICITY 18 PROTEIN"/>
    <property type="match status" value="1"/>
</dbReference>
<dbReference type="Pfam" id="PF08474">
    <property type="entry name" value="MYT1"/>
    <property type="match status" value="1"/>
</dbReference>
<dbReference type="Pfam" id="PF01530">
    <property type="entry name" value="zf-C2HC"/>
    <property type="match status" value="6"/>
</dbReference>
<dbReference type="SUPFAM" id="SSF103637">
    <property type="entry name" value="CCHHC domain"/>
    <property type="match status" value="6"/>
</dbReference>
<dbReference type="PROSITE" id="PS51802">
    <property type="entry name" value="ZF_CCHHC"/>
    <property type="match status" value="6"/>
</dbReference>
<evidence type="ECO:0000250" key="1"/>
<evidence type="ECO:0000255" key="2"/>
<evidence type="ECO:0000255" key="3">
    <source>
        <dbReference type="PROSITE-ProRule" id="PRU01143"/>
    </source>
</evidence>
<evidence type="ECO:0000256" key="4">
    <source>
        <dbReference type="SAM" id="MobiDB-lite"/>
    </source>
</evidence>
<evidence type="ECO:0000269" key="5">
    <source>
    </source>
</evidence>
<evidence type="ECO:0000305" key="6"/>
<evidence type="ECO:0007829" key="7">
    <source>
        <dbReference type="PDB" id="2CS8"/>
    </source>
</evidence>
<feature type="chain" id="PRO_0000234030" description="Suppression of tumorigenicity 18 protein">
    <location>
        <begin position="1"/>
        <end position="1047"/>
    </location>
</feature>
<feature type="zinc finger region" description="CCHHC-type 1" evidence="3">
    <location>
        <begin position="359"/>
        <end position="402"/>
    </location>
</feature>
<feature type="zinc finger region" description="CCHHC-type 2" evidence="3">
    <location>
        <begin position="403"/>
        <end position="446"/>
    </location>
</feature>
<feature type="zinc finger region" description="CCHHC-type 3" evidence="3">
    <location>
        <begin position="715"/>
        <end position="758"/>
    </location>
</feature>
<feature type="zinc finger region" description="CCHHC-type 4" evidence="3">
    <location>
        <begin position="759"/>
        <end position="802"/>
    </location>
</feature>
<feature type="zinc finger region" description="CCHHC-type 5" evidence="3">
    <location>
        <begin position="807"/>
        <end position="850"/>
    </location>
</feature>
<feature type="zinc finger region" description="CCHHC-type 6" evidence="3">
    <location>
        <begin position="860"/>
        <end position="903"/>
    </location>
</feature>
<feature type="region of interest" description="Disordered" evidence="4">
    <location>
        <begin position="41"/>
        <end position="92"/>
    </location>
</feature>
<feature type="region of interest" description="Disordered" evidence="4">
    <location>
        <begin position="168"/>
        <end position="221"/>
    </location>
</feature>
<feature type="region of interest" description="Disordered" evidence="4">
    <location>
        <begin position="251"/>
        <end position="286"/>
    </location>
</feature>
<feature type="region of interest" description="Disordered" evidence="4">
    <location>
        <begin position="523"/>
        <end position="563"/>
    </location>
</feature>
<feature type="region of interest" description="Disordered" evidence="4">
    <location>
        <begin position="672"/>
        <end position="710"/>
    </location>
</feature>
<feature type="coiled-coil region" evidence="2">
    <location>
        <begin position="920"/>
        <end position="992"/>
    </location>
</feature>
<feature type="compositionally biased region" description="Basic residues" evidence="4">
    <location>
        <begin position="52"/>
        <end position="65"/>
    </location>
</feature>
<feature type="compositionally biased region" description="Basic and acidic residues" evidence="4">
    <location>
        <begin position="171"/>
        <end position="181"/>
    </location>
</feature>
<feature type="compositionally biased region" description="Polar residues" evidence="4">
    <location>
        <begin position="550"/>
        <end position="563"/>
    </location>
</feature>
<feature type="compositionally biased region" description="Basic and acidic residues" evidence="4">
    <location>
        <begin position="677"/>
        <end position="687"/>
    </location>
</feature>
<feature type="binding site" evidence="3">
    <location>
        <position position="368"/>
    </location>
    <ligand>
        <name>Zn(2+)</name>
        <dbReference type="ChEBI" id="CHEBI:29105"/>
        <label>1</label>
    </ligand>
</feature>
<feature type="binding site" evidence="3">
    <location>
        <position position="373"/>
    </location>
    <ligand>
        <name>Zn(2+)</name>
        <dbReference type="ChEBI" id="CHEBI:29105"/>
        <label>1</label>
    </ligand>
</feature>
<feature type="binding site" evidence="3">
    <location>
        <position position="386"/>
    </location>
    <ligand>
        <name>Zn(2+)</name>
        <dbReference type="ChEBI" id="CHEBI:29105"/>
        <label>1</label>
    </ligand>
</feature>
<feature type="binding site" evidence="3">
    <location>
        <position position="392"/>
    </location>
    <ligand>
        <name>Zn(2+)</name>
        <dbReference type="ChEBI" id="CHEBI:29105"/>
        <label>1</label>
    </ligand>
</feature>
<feature type="binding site" evidence="3">
    <location>
        <position position="412"/>
    </location>
    <ligand>
        <name>Zn(2+)</name>
        <dbReference type="ChEBI" id="CHEBI:29105"/>
        <label>2</label>
    </ligand>
</feature>
<feature type="binding site" evidence="3">
    <location>
        <position position="417"/>
    </location>
    <ligand>
        <name>Zn(2+)</name>
        <dbReference type="ChEBI" id="CHEBI:29105"/>
        <label>2</label>
    </ligand>
</feature>
<feature type="binding site" evidence="3">
    <location>
        <position position="430"/>
    </location>
    <ligand>
        <name>Zn(2+)</name>
        <dbReference type="ChEBI" id="CHEBI:29105"/>
        <label>2</label>
    </ligand>
</feature>
<feature type="binding site" evidence="3">
    <location>
        <position position="436"/>
    </location>
    <ligand>
        <name>Zn(2+)</name>
        <dbReference type="ChEBI" id="CHEBI:29105"/>
        <label>2</label>
    </ligand>
</feature>
<feature type="binding site" evidence="3">
    <location>
        <position position="724"/>
    </location>
    <ligand>
        <name>Zn(2+)</name>
        <dbReference type="ChEBI" id="CHEBI:29105"/>
        <label>3</label>
    </ligand>
</feature>
<feature type="binding site" evidence="3">
    <location>
        <position position="729"/>
    </location>
    <ligand>
        <name>Zn(2+)</name>
        <dbReference type="ChEBI" id="CHEBI:29105"/>
        <label>3</label>
    </ligand>
</feature>
<feature type="binding site" evidence="3">
    <location>
        <position position="742"/>
    </location>
    <ligand>
        <name>Zn(2+)</name>
        <dbReference type="ChEBI" id="CHEBI:29105"/>
        <label>3</label>
    </ligand>
</feature>
<feature type="binding site" evidence="3">
    <location>
        <position position="748"/>
    </location>
    <ligand>
        <name>Zn(2+)</name>
        <dbReference type="ChEBI" id="CHEBI:29105"/>
        <label>3</label>
    </ligand>
</feature>
<feature type="binding site" evidence="3">
    <location>
        <position position="768"/>
    </location>
    <ligand>
        <name>Zn(2+)</name>
        <dbReference type="ChEBI" id="CHEBI:29105"/>
        <label>4</label>
    </ligand>
</feature>
<feature type="binding site" evidence="3">
    <location>
        <position position="773"/>
    </location>
    <ligand>
        <name>Zn(2+)</name>
        <dbReference type="ChEBI" id="CHEBI:29105"/>
        <label>4</label>
    </ligand>
</feature>
<feature type="binding site" evidence="3">
    <location>
        <position position="786"/>
    </location>
    <ligand>
        <name>Zn(2+)</name>
        <dbReference type="ChEBI" id="CHEBI:29105"/>
        <label>4</label>
    </ligand>
</feature>
<feature type="binding site" evidence="3">
    <location>
        <position position="792"/>
    </location>
    <ligand>
        <name>Zn(2+)</name>
        <dbReference type="ChEBI" id="CHEBI:29105"/>
        <label>4</label>
    </ligand>
</feature>
<feature type="binding site" evidence="3">
    <location>
        <position position="816"/>
    </location>
    <ligand>
        <name>Zn(2+)</name>
        <dbReference type="ChEBI" id="CHEBI:29105"/>
        <label>5</label>
    </ligand>
</feature>
<feature type="binding site" evidence="3">
    <location>
        <position position="821"/>
    </location>
    <ligand>
        <name>Zn(2+)</name>
        <dbReference type="ChEBI" id="CHEBI:29105"/>
        <label>5</label>
    </ligand>
</feature>
<feature type="binding site" evidence="3">
    <location>
        <position position="834"/>
    </location>
    <ligand>
        <name>Zn(2+)</name>
        <dbReference type="ChEBI" id="CHEBI:29105"/>
        <label>5</label>
    </ligand>
</feature>
<feature type="binding site" evidence="3">
    <location>
        <position position="840"/>
    </location>
    <ligand>
        <name>Zn(2+)</name>
        <dbReference type="ChEBI" id="CHEBI:29105"/>
        <label>5</label>
    </ligand>
</feature>
<feature type="binding site" evidence="3">
    <location>
        <position position="869"/>
    </location>
    <ligand>
        <name>Zn(2+)</name>
        <dbReference type="ChEBI" id="CHEBI:29105"/>
        <label>6</label>
    </ligand>
</feature>
<feature type="binding site" evidence="3">
    <location>
        <position position="874"/>
    </location>
    <ligand>
        <name>Zn(2+)</name>
        <dbReference type="ChEBI" id="CHEBI:29105"/>
        <label>6</label>
    </ligand>
</feature>
<feature type="binding site" evidence="3">
    <location>
        <position position="887"/>
    </location>
    <ligand>
        <name>Zn(2+)</name>
        <dbReference type="ChEBI" id="CHEBI:29105"/>
        <label>6</label>
    </ligand>
</feature>
<feature type="binding site" evidence="3">
    <location>
        <position position="893"/>
    </location>
    <ligand>
        <name>Zn(2+)</name>
        <dbReference type="ChEBI" id="CHEBI:29105"/>
        <label>6</label>
    </ligand>
</feature>
<feature type="sequence variant" id="VAR_052732" description="In dbSNP:rs2303460.">
    <original>R</original>
    <variation>C</variation>
    <location>
        <position position="515"/>
    </location>
</feature>
<feature type="strand" evidence="7">
    <location>
        <begin position="823"/>
        <end position="825"/>
    </location>
</feature>
<feature type="strand" evidence="7">
    <location>
        <begin position="827"/>
        <end position="830"/>
    </location>
</feature>
<feature type="strand" evidence="7">
    <location>
        <begin position="835"/>
        <end position="837"/>
    </location>
</feature>
<feature type="helix" evidence="7">
    <location>
        <begin position="841"/>
        <end position="847"/>
    </location>
</feature>
<feature type="turn" evidence="7">
    <location>
        <begin position="890"/>
        <end position="892"/>
    </location>
</feature>
<feature type="helix" evidence="7">
    <location>
        <begin position="894"/>
        <end position="899"/>
    </location>
</feature>
<name>ST18_HUMAN</name>
<protein>
    <recommendedName>
        <fullName>Suppression of tumorigenicity 18 protein</fullName>
    </recommendedName>
    <alternativeName>
        <fullName>Zinc finger protein 387</fullName>
    </alternativeName>
</protein>
<gene>
    <name type="primary">ST18</name>
    <name type="synonym">KIAA0535</name>
    <name type="synonym">ZNF387</name>
</gene>